<dbReference type="EMBL" id="D21135">
    <property type="protein sequence ID" value="BAA04670.1"/>
    <property type="molecule type" value="mRNA"/>
</dbReference>
<dbReference type="EMBL" id="AL954694">
    <property type="protein sequence ID" value="CAM14069.1"/>
    <property type="molecule type" value="Genomic_DNA"/>
</dbReference>
<dbReference type="EMBL" id="BC060892">
    <property type="protein sequence ID" value="AAH60892.1"/>
    <property type="molecule type" value="mRNA"/>
</dbReference>
<dbReference type="PIR" id="I51739">
    <property type="entry name" value="I51739"/>
</dbReference>
<dbReference type="RefSeq" id="NP_571037.1">
    <property type="nucleotide sequence ID" value="NM_130962.1"/>
</dbReference>
<dbReference type="BMRB" id="P53405"/>
<dbReference type="SMR" id="P53405"/>
<dbReference type="FunCoup" id="P53405">
    <property type="interactions" value="426"/>
</dbReference>
<dbReference type="STRING" id="7955.ENSDARP00000012903"/>
<dbReference type="iPTMnet" id="P53405"/>
<dbReference type="PaxDb" id="7955-ENSDARP00000012903"/>
<dbReference type="Ensembl" id="ENSDART00000010896">
    <property type="protein sequence ID" value="ENSDARP00000012903"/>
    <property type="gene ID" value="ENSDARG00000004023"/>
</dbReference>
<dbReference type="GeneID" id="30147"/>
<dbReference type="KEGG" id="dre:30147"/>
<dbReference type="AGR" id="ZFIN:ZDB-GENE-980526-112"/>
<dbReference type="CTD" id="30147"/>
<dbReference type="ZFIN" id="ZDB-GENE-980526-112">
    <property type="gene designation" value="isl1a"/>
</dbReference>
<dbReference type="eggNOG" id="KOG0490">
    <property type="taxonomic scope" value="Eukaryota"/>
</dbReference>
<dbReference type="HOGENOM" id="CLU_027802_2_0_1"/>
<dbReference type="InParanoid" id="P53405"/>
<dbReference type="OMA" id="SPMHGNR"/>
<dbReference type="OrthoDB" id="125004at2759"/>
<dbReference type="PhylomeDB" id="P53405"/>
<dbReference type="TreeFam" id="TF315442"/>
<dbReference type="PRO" id="PR:P53405"/>
<dbReference type="Proteomes" id="UP000000437">
    <property type="component" value="Chromosome 5"/>
</dbReference>
<dbReference type="Bgee" id="ENSDARG00000004023">
    <property type="expression patterns" value="Expressed in neuron and 121 other cell types or tissues"/>
</dbReference>
<dbReference type="GO" id="GO:0005634">
    <property type="term" value="C:nucleus"/>
    <property type="evidence" value="ECO:0000314"/>
    <property type="project" value="ZFIN"/>
</dbReference>
<dbReference type="GO" id="GO:0000987">
    <property type="term" value="F:cis-regulatory region sequence-specific DNA binding"/>
    <property type="evidence" value="ECO:0000318"/>
    <property type="project" value="GO_Central"/>
</dbReference>
<dbReference type="GO" id="GO:0000981">
    <property type="term" value="F:DNA-binding transcription factor activity, RNA polymerase II-specific"/>
    <property type="evidence" value="ECO:0000318"/>
    <property type="project" value="GO_Central"/>
</dbReference>
<dbReference type="GO" id="GO:0046872">
    <property type="term" value="F:metal ion binding"/>
    <property type="evidence" value="ECO:0007669"/>
    <property type="project" value="UniProtKB-KW"/>
</dbReference>
<dbReference type="GO" id="GO:0055011">
    <property type="term" value="P:atrial cardiac muscle cell differentiation"/>
    <property type="evidence" value="ECO:0000315"/>
    <property type="project" value="ZFIN"/>
</dbReference>
<dbReference type="GO" id="GO:0048675">
    <property type="term" value="P:axon extension"/>
    <property type="evidence" value="ECO:0000315"/>
    <property type="project" value="ZFIN"/>
</dbReference>
<dbReference type="GO" id="GO:0007409">
    <property type="term" value="P:axonogenesis"/>
    <property type="evidence" value="ECO:0000318"/>
    <property type="project" value="GO_Central"/>
</dbReference>
<dbReference type="GO" id="GO:0031018">
    <property type="term" value="P:endocrine pancreas development"/>
    <property type="evidence" value="ECO:0000315"/>
    <property type="project" value="ZFIN"/>
</dbReference>
<dbReference type="GO" id="GO:0031017">
    <property type="term" value="P:exocrine pancreas development"/>
    <property type="evidence" value="ECO:0000315"/>
    <property type="project" value="ZFIN"/>
</dbReference>
<dbReference type="GO" id="GO:0097154">
    <property type="term" value="P:GABAergic neuron differentiation"/>
    <property type="evidence" value="ECO:0000315"/>
    <property type="project" value="ZFIN"/>
</dbReference>
<dbReference type="GO" id="GO:0007507">
    <property type="term" value="P:heart development"/>
    <property type="evidence" value="ECO:0000250"/>
    <property type="project" value="UniProtKB"/>
</dbReference>
<dbReference type="GO" id="GO:0048666">
    <property type="term" value="P:neuron development"/>
    <property type="evidence" value="ECO:0000315"/>
    <property type="project" value="ZFIN"/>
</dbReference>
<dbReference type="GO" id="GO:0048665">
    <property type="term" value="P:neuron fate specification"/>
    <property type="evidence" value="ECO:0000315"/>
    <property type="project" value="ZFIN"/>
</dbReference>
<dbReference type="GO" id="GO:0003322">
    <property type="term" value="P:pancreatic A cell development"/>
    <property type="evidence" value="ECO:0000315"/>
    <property type="project" value="ZFIN"/>
</dbReference>
<dbReference type="GO" id="GO:0003324">
    <property type="term" value="P:pancreatic D cell development"/>
    <property type="evidence" value="ECO:0000315"/>
    <property type="project" value="ZFIN"/>
</dbReference>
<dbReference type="GO" id="GO:0048936">
    <property type="term" value="P:peripheral nervous system neuron axonogenesis"/>
    <property type="evidence" value="ECO:0000315"/>
    <property type="project" value="ZFIN"/>
</dbReference>
<dbReference type="GO" id="GO:0045944">
    <property type="term" value="P:positive regulation of transcription by RNA polymerase II"/>
    <property type="evidence" value="ECO:0000250"/>
    <property type="project" value="UniProtKB"/>
</dbReference>
<dbReference type="GO" id="GO:0008016">
    <property type="term" value="P:regulation of heart contraction"/>
    <property type="evidence" value="ECO:0000315"/>
    <property type="project" value="ZFIN"/>
</dbReference>
<dbReference type="GO" id="GO:0060931">
    <property type="term" value="P:sinoatrial node cell development"/>
    <property type="evidence" value="ECO:0000315"/>
    <property type="project" value="BHF-UCL"/>
</dbReference>
<dbReference type="GO" id="GO:0021527">
    <property type="term" value="P:spinal cord association neuron differentiation"/>
    <property type="evidence" value="ECO:0000315"/>
    <property type="project" value="ZFIN"/>
</dbReference>
<dbReference type="GO" id="GO:0021522">
    <property type="term" value="P:spinal cord motor neuron differentiation"/>
    <property type="evidence" value="ECO:0000315"/>
    <property type="project" value="ZFIN"/>
</dbReference>
<dbReference type="GO" id="GO:0003323">
    <property type="term" value="P:type B pancreatic cell development"/>
    <property type="evidence" value="ECO:0000315"/>
    <property type="project" value="ZFIN"/>
</dbReference>
<dbReference type="CDD" id="cd00086">
    <property type="entry name" value="homeodomain"/>
    <property type="match status" value="1"/>
</dbReference>
<dbReference type="CDD" id="cd09366">
    <property type="entry name" value="LIM1_Isl"/>
    <property type="match status" value="1"/>
</dbReference>
<dbReference type="CDD" id="cd09374">
    <property type="entry name" value="LIM2_Isl"/>
    <property type="match status" value="1"/>
</dbReference>
<dbReference type="FunFam" id="2.10.110.10:FF:000034">
    <property type="entry name" value="Insulin gene enhancer protein ISL"/>
    <property type="match status" value="1"/>
</dbReference>
<dbReference type="FunFam" id="1.10.10.60:FF:000041">
    <property type="entry name" value="insulin gene enhancer protein ISL-1"/>
    <property type="match status" value="1"/>
</dbReference>
<dbReference type="FunFam" id="2.10.110.10:FF:000056">
    <property type="entry name" value="insulin gene enhancer protein ISL-1"/>
    <property type="match status" value="1"/>
</dbReference>
<dbReference type="Gene3D" id="2.10.110.10">
    <property type="entry name" value="Cysteine Rich Protein"/>
    <property type="match status" value="2"/>
</dbReference>
<dbReference type="Gene3D" id="1.10.10.60">
    <property type="entry name" value="Homeodomain-like"/>
    <property type="match status" value="1"/>
</dbReference>
<dbReference type="InterPro" id="IPR001356">
    <property type="entry name" value="HD"/>
</dbReference>
<dbReference type="InterPro" id="IPR017970">
    <property type="entry name" value="Homeobox_CS"/>
</dbReference>
<dbReference type="InterPro" id="IPR009057">
    <property type="entry name" value="Homeodomain-like_sf"/>
</dbReference>
<dbReference type="InterPro" id="IPR047169">
    <property type="entry name" value="ISL1/2-like"/>
</dbReference>
<dbReference type="InterPro" id="IPR047244">
    <property type="entry name" value="ISL1/2-like_LIM1"/>
</dbReference>
<dbReference type="InterPro" id="IPR001781">
    <property type="entry name" value="Znf_LIM"/>
</dbReference>
<dbReference type="PANTHER" id="PTHR24204">
    <property type="entry name" value="INSULIN GENE ENHANCER PROTEIN"/>
    <property type="match status" value="1"/>
</dbReference>
<dbReference type="PANTHER" id="PTHR24204:SF4">
    <property type="entry name" value="INSULIN GENE ENHANCER PROTEIN ISL-1"/>
    <property type="match status" value="1"/>
</dbReference>
<dbReference type="Pfam" id="PF00046">
    <property type="entry name" value="Homeodomain"/>
    <property type="match status" value="1"/>
</dbReference>
<dbReference type="Pfam" id="PF00412">
    <property type="entry name" value="LIM"/>
    <property type="match status" value="2"/>
</dbReference>
<dbReference type="SMART" id="SM00389">
    <property type="entry name" value="HOX"/>
    <property type="match status" value="1"/>
</dbReference>
<dbReference type="SMART" id="SM00132">
    <property type="entry name" value="LIM"/>
    <property type="match status" value="2"/>
</dbReference>
<dbReference type="SUPFAM" id="SSF57716">
    <property type="entry name" value="Glucocorticoid receptor-like (DNA-binding domain)"/>
    <property type="match status" value="2"/>
</dbReference>
<dbReference type="SUPFAM" id="SSF46689">
    <property type="entry name" value="Homeodomain-like"/>
    <property type="match status" value="1"/>
</dbReference>
<dbReference type="PROSITE" id="PS00027">
    <property type="entry name" value="HOMEOBOX_1"/>
    <property type="match status" value="1"/>
</dbReference>
<dbReference type="PROSITE" id="PS50071">
    <property type="entry name" value="HOMEOBOX_2"/>
    <property type="match status" value="1"/>
</dbReference>
<dbReference type="PROSITE" id="PS00478">
    <property type="entry name" value="LIM_DOMAIN_1"/>
    <property type="match status" value="2"/>
</dbReference>
<dbReference type="PROSITE" id="PS50023">
    <property type="entry name" value="LIM_DOMAIN_2"/>
    <property type="match status" value="2"/>
</dbReference>
<proteinExistence type="evidence at transcript level"/>
<sequence>MGDMGDPPKKKRLISLCVGCGNQIHDQYILRVSPDLEWHAACLKCAECNQYLDESCTCFVRDGKTYCKRDYIRLYGIKCAKCNIGFSKNDFVMRARSKVYHIECFRCVACSRQLIPGDEFALREDGLFCRADHDVVERATMGAGDPLSPLHPARPLQMAAEPISARQPALRPHVHKQPEKTTRVRTVLNEKQLHTLRTCYNANPRPDALMKEQLVEMTGLSPRVIRVWFQNKRCKDKKRSILMKQLQQQQPNDKTNIQGMTGTPMVATSPERHDGGLQANQVEVQSYQPPWKVLSDFALQSDIDQPAFQQLVNFSEGGPGSNSTGSEVASMSSQLPDTPNSMVASPIEA</sequence>
<accession>P53405</accession>
<accession>A2AWM5</accession>
<protein>
    <recommendedName>
        <fullName>Insulin gene enhancer protein isl-1</fullName>
        <shortName>Islet-1</shortName>
    </recommendedName>
</protein>
<keyword id="KW-0010">Activator</keyword>
<keyword id="KW-0217">Developmental protein</keyword>
<keyword id="KW-0221">Differentiation</keyword>
<keyword id="KW-0238">DNA-binding</keyword>
<keyword id="KW-0371">Homeobox</keyword>
<keyword id="KW-0440">LIM domain</keyword>
<keyword id="KW-0479">Metal-binding</keyword>
<keyword id="KW-0539">Nucleus</keyword>
<keyword id="KW-1185">Reference proteome</keyword>
<keyword id="KW-0677">Repeat</keyword>
<keyword id="KW-0804">Transcription</keyword>
<keyword id="KW-0805">Transcription regulation</keyword>
<keyword id="KW-0862">Zinc</keyword>
<reference key="1">
    <citation type="journal article" date="1994" name="Dev. Dyn.">
        <title>Developmental regulation of islet-1 mRNA expression during neuronal differentiation in embryonic zebrafish.</title>
        <authorList>
            <person name="Inoue A."/>
            <person name="Takahashi M."/>
            <person name="Hatta K."/>
            <person name="Hotta Y."/>
            <person name="Okamoto H."/>
        </authorList>
    </citation>
    <scope>NUCLEOTIDE SEQUENCE [MRNA]</scope>
    <scope>DEVELOPMENTAL STAGE</scope>
</reference>
<reference key="2">
    <citation type="journal article" date="2013" name="Nature">
        <title>The zebrafish reference genome sequence and its relationship to the human genome.</title>
        <authorList>
            <person name="Howe K."/>
            <person name="Clark M.D."/>
            <person name="Torroja C.F."/>
            <person name="Torrance J."/>
            <person name="Berthelot C."/>
            <person name="Muffato M."/>
            <person name="Collins J.E."/>
            <person name="Humphray S."/>
            <person name="McLaren K."/>
            <person name="Matthews L."/>
            <person name="McLaren S."/>
            <person name="Sealy I."/>
            <person name="Caccamo M."/>
            <person name="Churcher C."/>
            <person name="Scott C."/>
            <person name="Barrett J.C."/>
            <person name="Koch R."/>
            <person name="Rauch G.J."/>
            <person name="White S."/>
            <person name="Chow W."/>
            <person name="Kilian B."/>
            <person name="Quintais L.T."/>
            <person name="Guerra-Assuncao J.A."/>
            <person name="Zhou Y."/>
            <person name="Gu Y."/>
            <person name="Yen J."/>
            <person name="Vogel J.H."/>
            <person name="Eyre T."/>
            <person name="Redmond S."/>
            <person name="Banerjee R."/>
            <person name="Chi J."/>
            <person name="Fu B."/>
            <person name="Langley E."/>
            <person name="Maguire S.F."/>
            <person name="Laird G.K."/>
            <person name="Lloyd D."/>
            <person name="Kenyon E."/>
            <person name="Donaldson S."/>
            <person name="Sehra H."/>
            <person name="Almeida-King J."/>
            <person name="Loveland J."/>
            <person name="Trevanion S."/>
            <person name="Jones M."/>
            <person name="Quail M."/>
            <person name="Willey D."/>
            <person name="Hunt A."/>
            <person name="Burton J."/>
            <person name="Sims S."/>
            <person name="McLay K."/>
            <person name="Plumb B."/>
            <person name="Davis J."/>
            <person name="Clee C."/>
            <person name="Oliver K."/>
            <person name="Clark R."/>
            <person name="Riddle C."/>
            <person name="Elliot D."/>
            <person name="Threadgold G."/>
            <person name="Harden G."/>
            <person name="Ware D."/>
            <person name="Begum S."/>
            <person name="Mortimore B."/>
            <person name="Kerry G."/>
            <person name="Heath P."/>
            <person name="Phillimore B."/>
            <person name="Tracey A."/>
            <person name="Corby N."/>
            <person name="Dunn M."/>
            <person name="Johnson C."/>
            <person name="Wood J."/>
            <person name="Clark S."/>
            <person name="Pelan S."/>
            <person name="Griffiths G."/>
            <person name="Smith M."/>
            <person name="Glithero R."/>
            <person name="Howden P."/>
            <person name="Barker N."/>
            <person name="Lloyd C."/>
            <person name="Stevens C."/>
            <person name="Harley J."/>
            <person name="Holt K."/>
            <person name="Panagiotidis G."/>
            <person name="Lovell J."/>
            <person name="Beasley H."/>
            <person name="Henderson C."/>
            <person name="Gordon D."/>
            <person name="Auger K."/>
            <person name="Wright D."/>
            <person name="Collins J."/>
            <person name="Raisen C."/>
            <person name="Dyer L."/>
            <person name="Leung K."/>
            <person name="Robertson L."/>
            <person name="Ambridge K."/>
            <person name="Leongamornlert D."/>
            <person name="McGuire S."/>
            <person name="Gilderthorp R."/>
            <person name="Griffiths C."/>
            <person name="Manthravadi D."/>
            <person name="Nichol S."/>
            <person name="Barker G."/>
            <person name="Whitehead S."/>
            <person name="Kay M."/>
            <person name="Brown J."/>
            <person name="Murnane C."/>
            <person name="Gray E."/>
            <person name="Humphries M."/>
            <person name="Sycamore N."/>
            <person name="Barker D."/>
            <person name="Saunders D."/>
            <person name="Wallis J."/>
            <person name="Babbage A."/>
            <person name="Hammond S."/>
            <person name="Mashreghi-Mohammadi M."/>
            <person name="Barr L."/>
            <person name="Martin S."/>
            <person name="Wray P."/>
            <person name="Ellington A."/>
            <person name="Matthews N."/>
            <person name="Ellwood M."/>
            <person name="Woodmansey R."/>
            <person name="Clark G."/>
            <person name="Cooper J."/>
            <person name="Tromans A."/>
            <person name="Grafham D."/>
            <person name="Skuce C."/>
            <person name="Pandian R."/>
            <person name="Andrews R."/>
            <person name="Harrison E."/>
            <person name="Kimberley A."/>
            <person name="Garnett J."/>
            <person name="Fosker N."/>
            <person name="Hall R."/>
            <person name="Garner P."/>
            <person name="Kelly D."/>
            <person name="Bird C."/>
            <person name="Palmer S."/>
            <person name="Gehring I."/>
            <person name="Berger A."/>
            <person name="Dooley C.M."/>
            <person name="Ersan-Urun Z."/>
            <person name="Eser C."/>
            <person name="Geiger H."/>
            <person name="Geisler M."/>
            <person name="Karotki L."/>
            <person name="Kirn A."/>
            <person name="Konantz J."/>
            <person name="Konantz M."/>
            <person name="Oberlander M."/>
            <person name="Rudolph-Geiger S."/>
            <person name="Teucke M."/>
            <person name="Lanz C."/>
            <person name="Raddatz G."/>
            <person name="Osoegawa K."/>
            <person name="Zhu B."/>
            <person name="Rapp A."/>
            <person name="Widaa S."/>
            <person name="Langford C."/>
            <person name="Yang F."/>
            <person name="Schuster S.C."/>
            <person name="Carter N.P."/>
            <person name="Harrow J."/>
            <person name="Ning Z."/>
            <person name="Herrero J."/>
            <person name="Searle S.M."/>
            <person name="Enright A."/>
            <person name="Geisler R."/>
            <person name="Plasterk R.H."/>
            <person name="Lee C."/>
            <person name="Westerfield M."/>
            <person name="de Jong P.J."/>
            <person name="Zon L.I."/>
            <person name="Postlethwait J.H."/>
            <person name="Nusslein-Volhard C."/>
            <person name="Hubbard T.J."/>
            <person name="Roest Crollius H."/>
            <person name="Rogers J."/>
            <person name="Stemple D.L."/>
        </authorList>
    </citation>
    <scope>NUCLEOTIDE SEQUENCE [LARGE SCALE GENOMIC DNA]</scope>
    <source>
        <strain>Tuebingen</strain>
    </source>
</reference>
<reference key="3">
    <citation type="submission" date="2003-11" db="EMBL/GenBank/DDBJ databases">
        <authorList>
            <consortium name="NIH - Zebrafish Gene Collection (ZGC) project"/>
        </authorList>
    </citation>
    <scope>NUCLEOTIDE SEQUENCE [LARGE SCALE MRNA]</scope>
    <source>
        <tissue>Eye</tissue>
    </source>
</reference>
<feature type="chain" id="PRO_0000075751" description="Insulin gene enhancer protein isl-1">
    <location>
        <begin position="1"/>
        <end position="349"/>
    </location>
</feature>
<feature type="domain" description="LIM zinc-binding 1" evidence="4">
    <location>
        <begin position="17"/>
        <end position="70"/>
    </location>
</feature>
<feature type="domain" description="LIM zinc-binding 2" evidence="4">
    <location>
        <begin position="79"/>
        <end position="133"/>
    </location>
</feature>
<feature type="DNA-binding region" description="Homeobox" evidence="3">
    <location>
        <begin position="181"/>
        <end position="240"/>
    </location>
</feature>
<feature type="region of interest" description="Disordered" evidence="5">
    <location>
        <begin position="312"/>
        <end position="349"/>
    </location>
</feature>
<feature type="compositionally biased region" description="Polar residues" evidence="5">
    <location>
        <begin position="321"/>
        <end position="343"/>
    </location>
</feature>
<comment type="function">
    <text evidence="1 2">DNA-binding transcriptional activator. Recognizes and binds to the consensus octamer binding site 5'-ATAATTAA-3' in promoter of target genes. Plays a fundamental role in the gene regulatory network essential for retinal ganglion cell (RGC) differentiation. May be involved in subtype specialization of primary motoneurons. May bind to insulin gene enhancer sequences. Essential for heart development (By similarity).</text>
</comment>
<comment type="subcellular location">
    <subcellularLocation>
        <location evidence="1">Nucleus</location>
    </subcellularLocation>
</comment>
<comment type="developmental stage">
    <text evidence="6">Expressed immediately after gastrulation in the polster, cranial ganglia, rohan-beard neurons and in ventromedial cells of the spinal cord at 12 hours post-fertilization (hpf). Expressed in cells slightly anterior to the segment border at 16 hpf.</text>
</comment>
<organism>
    <name type="scientific">Danio rerio</name>
    <name type="common">Zebrafish</name>
    <name type="synonym">Brachydanio rerio</name>
    <dbReference type="NCBI Taxonomy" id="7955"/>
    <lineage>
        <taxon>Eukaryota</taxon>
        <taxon>Metazoa</taxon>
        <taxon>Chordata</taxon>
        <taxon>Craniata</taxon>
        <taxon>Vertebrata</taxon>
        <taxon>Euteleostomi</taxon>
        <taxon>Actinopterygii</taxon>
        <taxon>Neopterygii</taxon>
        <taxon>Teleostei</taxon>
        <taxon>Ostariophysi</taxon>
        <taxon>Cypriniformes</taxon>
        <taxon>Danionidae</taxon>
        <taxon>Danioninae</taxon>
        <taxon>Danio</taxon>
    </lineage>
</organism>
<evidence type="ECO:0000250" key="1">
    <source>
        <dbReference type="UniProtKB" id="P61372"/>
    </source>
</evidence>
<evidence type="ECO:0000250" key="2">
    <source>
        <dbReference type="UniProtKB" id="P61374"/>
    </source>
</evidence>
<evidence type="ECO:0000255" key="3">
    <source>
        <dbReference type="PROSITE-ProRule" id="PRU00108"/>
    </source>
</evidence>
<evidence type="ECO:0000255" key="4">
    <source>
        <dbReference type="PROSITE-ProRule" id="PRU00125"/>
    </source>
</evidence>
<evidence type="ECO:0000256" key="5">
    <source>
        <dbReference type="SAM" id="MobiDB-lite"/>
    </source>
</evidence>
<evidence type="ECO:0000269" key="6">
    <source>
    </source>
</evidence>
<gene>
    <name type="primary">isl1</name>
    <name type="synonym">isl-1</name>
    <name type="ORF">si:ch211-219f7.1</name>
</gene>
<name>ISL1_DANRE</name>